<evidence type="ECO:0000250" key="1"/>
<evidence type="ECO:0000250" key="2">
    <source>
        <dbReference type="UniProtKB" id="P38242"/>
    </source>
</evidence>
<evidence type="ECO:0000255" key="3"/>
<evidence type="ECO:0000305" key="4"/>
<protein>
    <recommendedName>
        <fullName>UDP-N-acetylglucosamine transferase subunit alg14</fullName>
    </recommendedName>
    <alternativeName>
        <fullName>Asparagine-linked glycosylation protein 14</fullName>
    </alternativeName>
</protein>
<name>ALG14_ASPFU</name>
<organism>
    <name type="scientific">Aspergillus fumigatus (strain ATCC MYA-4609 / CBS 101355 / FGSC A1100 / Af293)</name>
    <name type="common">Neosartorya fumigata</name>
    <dbReference type="NCBI Taxonomy" id="330879"/>
    <lineage>
        <taxon>Eukaryota</taxon>
        <taxon>Fungi</taxon>
        <taxon>Dikarya</taxon>
        <taxon>Ascomycota</taxon>
        <taxon>Pezizomycotina</taxon>
        <taxon>Eurotiomycetes</taxon>
        <taxon>Eurotiomycetidae</taxon>
        <taxon>Eurotiales</taxon>
        <taxon>Aspergillaceae</taxon>
        <taxon>Aspergillus</taxon>
        <taxon>Aspergillus subgen. Fumigati</taxon>
    </lineage>
</organism>
<gene>
    <name type="primary">alg14</name>
    <name type="ORF">AFUA_6G06940</name>
</gene>
<accession>Q4WNB5</accession>
<proteinExistence type="inferred from homology"/>
<reference key="1">
    <citation type="journal article" date="2005" name="Nature">
        <title>Genomic sequence of the pathogenic and allergenic filamentous fungus Aspergillus fumigatus.</title>
        <authorList>
            <person name="Nierman W.C."/>
            <person name="Pain A."/>
            <person name="Anderson M.J."/>
            <person name="Wortman J.R."/>
            <person name="Kim H.S."/>
            <person name="Arroyo J."/>
            <person name="Berriman M."/>
            <person name="Abe K."/>
            <person name="Archer D.B."/>
            <person name="Bermejo C."/>
            <person name="Bennett J.W."/>
            <person name="Bowyer P."/>
            <person name="Chen D."/>
            <person name="Collins M."/>
            <person name="Coulsen R."/>
            <person name="Davies R."/>
            <person name="Dyer P.S."/>
            <person name="Farman M.L."/>
            <person name="Fedorova N."/>
            <person name="Fedorova N.D."/>
            <person name="Feldblyum T.V."/>
            <person name="Fischer R."/>
            <person name="Fosker N."/>
            <person name="Fraser A."/>
            <person name="Garcia J.L."/>
            <person name="Garcia M.J."/>
            <person name="Goble A."/>
            <person name="Goldman G.H."/>
            <person name="Gomi K."/>
            <person name="Griffith-Jones S."/>
            <person name="Gwilliam R."/>
            <person name="Haas B.J."/>
            <person name="Haas H."/>
            <person name="Harris D.E."/>
            <person name="Horiuchi H."/>
            <person name="Huang J."/>
            <person name="Humphray S."/>
            <person name="Jimenez J."/>
            <person name="Keller N."/>
            <person name="Khouri H."/>
            <person name="Kitamoto K."/>
            <person name="Kobayashi T."/>
            <person name="Konzack S."/>
            <person name="Kulkarni R."/>
            <person name="Kumagai T."/>
            <person name="Lafton A."/>
            <person name="Latge J.-P."/>
            <person name="Li W."/>
            <person name="Lord A."/>
            <person name="Lu C."/>
            <person name="Majoros W.H."/>
            <person name="May G.S."/>
            <person name="Miller B.L."/>
            <person name="Mohamoud Y."/>
            <person name="Molina M."/>
            <person name="Monod M."/>
            <person name="Mouyna I."/>
            <person name="Mulligan S."/>
            <person name="Murphy L.D."/>
            <person name="O'Neil S."/>
            <person name="Paulsen I."/>
            <person name="Penalva M.A."/>
            <person name="Pertea M."/>
            <person name="Price C."/>
            <person name="Pritchard B.L."/>
            <person name="Quail M.A."/>
            <person name="Rabbinowitsch E."/>
            <person name="Rawlins N."/>
            <person name="Rajandream M.A."/>
            <person name="Reichard U."/>
            <person name="Renauld H."/>
            <person name="Robson G.D."/>
            <person name="Rodriguez de Cordoba S."/>
            <person name="Rodriguez-Pena J.M."/>
            <person name="Ronning C.M."/>
            <person name="Rutter S."/>
            <person name="Salzberg S.L."/>
            <person name="Sanchez M."/>
            <person name="Sanchez-Ferrero J.C."/>
            <person name="Saunders D."/>
            <person name="Seeger K."/>
            <person name="Squares R."/>
            <person name="Squares S."/>
            <person name="Takeuchi M."/>
            <person name="Tekaia F."/>
            <person name="Turner G."/>
            <person name="Vazquez de Aldana C.R."/>
            <person name="Weidman J."/>
            <person name="White O."/>
            <person name="Woodward J.R."/>
            <person name="Yu J.-H."/>
            <person name="Fraser C.M."/>
            <person name="Galagan J.E."/>
            <person name="Asai K."/>
            <person name="Machida M."/>
            <person name="Hall N."/>
            <person name="Barrell B.G."/>
            <person name="Denning D.W."/>
        </authorList>
    </citation>
    <scope>NUCLEOTIDE SEQUENCE [LARGE SCALE GENOMIC DNA]</scope>
    <source>
        <strain>ATCC MYA-4609 / CBS 101355 / FGSC A1100 / Af293</strain>
    </source>
</reference>
<dbReference type="EMBL" id="AAHF01000006">
    <property type="protein sequence ID" value="EAL88549.1"/>
    <property type="molecule type" value="Genomic_DNA"/>
</dbReference>
<dbReference type="RefSeq" id="XP_750587.1">
    <property type="nucleotide sequence ID" value="XM_745494.1"/>
</dbReference>
<dbReference type="STRING" id="330879.Q4WNB5"/>
<dbReference type="EnsemblFungi" id="EAL88549">
    <property type="protein sequence ID" value="EAL88549"/>
    <property type="gene ID" value="AFUA_6G06940"/>
</dbReference>
<dbReference type="GeneID" id="3508736"/>
<dbReference type="KEGG" id="afm:AFUA_6G06940"/>
<dbReference type="eggNOG" id="KOG3339">
    <property type="taxonomic scope" value="Eukaryota"/>
</dbReference>
<dbReference type="HOGENOM" id="CLU_064541_0_0_1"/>
<dbReference type="InParanoid" id="Q4WNB5"/>
<dbReference type="OMA" id="FSMLRRM"/>
<dbReference type="OrthoDB" id="37659at2759"/>
<dbReference type="Proteomes" id="UP000002530">
    <property type="component" value="Chromosome 6"/>
</dbReference>
<dbReference type="GO" id="GO:0031965">
    <property type="term" value="C:nuclear membrane"/>
    <property type="evidence" value="ECO:0007669"/>
    <property type="project" value="UniProtKB-SubCell"/>
</dbReference>
<dbReference type="GO" id="GO:0043541">
    <property type="term" value="C:UDP-N-acetylglucosamine transferase complex"/>
    <property type="evidence" value="ECO:0000318"/>
    <property type="project" value="GO_Central"/>
</dbReference>
<dbReference type="GO" id="GO:0006488">
    <property type="term" value="P:dolichol-linked oligosaccharide biosynthetic process"/>
    <property type="evidence" value="ECO:0000318"/>
    <property type="project" value="GO_Central"/>
</dbReference>
<dbReference type="Gene3D" id="3.40.50.2000">
    <property type="entry name" value="Glycogen Phosphorylase B"/>
    <property type="match status" value="1"/>
</dbReference>
<dbReference type="InterPro" id="IPR013969">
    <property type="entry name" value="Oligosacch_biosynth_Alg14"/>
</dbReference>
<dbReference type="PANTHER" id="PTHR12154">
    <property type="entry name" value="GLYCOSYL TRANSFERASE-RELATED"/>
    <property type="match status" value="1"/>
</dbReference>
<dbReference type="PANTHER" id="PTHR12154:SF4">
    <property type="entry name" value="UDP-N-ACETYLGLUCOSAMINE TRANSFERASE SUBUNIT ALG14 HOMOLOG"/>
    <property type="match status" value="1"/>
</dbReference>
<dbReference type="Pfam" id="PF08660">
    <property type="entry name" value="Alg14"/>
    <property type="match status" value="1"/>
</dbReference>
<comment type="function">
    <text evidence="1">Involved in protein N-glycosylation. Essential for the second step of the dolichol-linked oligosaccharide pathway. Anchors the catalytic subunit alg13 to the ER (By similarity).</text>
</comment>
<comment type="subunit">
    <text evidence="1">Heterodimer with alg13 to form a functional enzyme.</text>
</comment>
<comment type="subcellular location">
    <subcellularLocation>
        <location evidence="2">Endoplasmic reticulum membrane</location>
        <topology evidence="3">Single-pass membrane protein</topology>
    </subcellularLocation>
    <subcellularLocation>
        <location evidence="2">Nucleus membrane</location>
        <topology evidence="3">Single-pass membrane protein</topology>
    </subcellularLocation>
</comment>
<comment type="similarity">
    <text evidence="4">Belongs to the ALG14 family.</text>
</comment>
<feature type="chain" id="PRO_0000123810" description="UDP-N-acetylglucosamine transferase subunit alg14">
    <location>
        <begin position="1"/>
        <end position="228"/>
    </location>
</feature>
<feature type="topological domain" description="Lumenal" evidence="2">
    <location>
        <begin position="1"/>
        <end position="74"/>
    </location>
</feature>
<feature type="transmembrane region" description="Helical" evidence="3">
    <location>
        <begin position="75"/>
        <end position="93"/>
    </location>
</feature>
<feature type="topological domain" description="Cytoplasmic" evidence="2">
    <location>
        <begin position="94"/>
        <end position="228"/>
    </location>
</feature>
<keyword id="KW-0256">Endoplasmic reticulum</keyword>
<keyword id="KW-0472">Membrane</keyword>
<keyword id="KW-0539">Nucleus</keyword>
<keyword id="KW-1185">Reference proteome</keyword>
<keyword id="KW-0812">Transmembrane</keyword>
<keyword id="KW-1133">Transmembrane helix</keyword>
<sequence length="228" mass="25865">MFSMLRRMKLDPSTYTYRTYVVSSGDNFSAARAVEFETEWLKQSPKLSFPANGSNSTESYAVVTVPRARRVHQSYLTAPLSTLQCFYACFLVLCGRHPEQKSPLPTTNSPYPDVILTNGPATAVCMVLAAKSLRLFHYLKSLFYIKDHQDRDSSRSSQVKRSEDAPAPVHFQLRTIYVESWARVTTFSLSGKLLLPFADRFLVQWPDLAGKQAWRGMRETEYAGTLVD</sequence>